<keyword id="KW-0256">Endoplasmic reticulum</keyword>
<keyword id="KW-0931">ER-Golgi transport</keyword>
<keyword id="KW-0333">Golgi apparatus</keyword>
<keyword id="KW-0472">Membrane</keyword>
<keyword id="KW-0962">Peroxisome biogenesis</keyword>
<keyword id="KW-0653">Protein transport</keyword>
<keyword id="KW-1185">Reference proteome</keyword>
<keyword id="KW-0813">Transport</keyword>
<evidence type="ECO:0000250" key="1"/>
<evidence type="ECO:0000250" key="2">
    <source>
        <dbReference type="UniProtKB" id="Q96JE7"/>
    </source>
</evidence>
<evidence type="ECO:0000256" key="3">
    <source>
        <dbReference type="SAM" id="MobiDB-lite"/>
    </source>
</evidence>
<evidence type="ECO:0000305" key="4"/>
<organism>
    <name type="scientific">Gallus gallus</name>
    <name type="common">Chicken</name>
    <dbReference type="NCBI Taxonomy" id="9031"/>
    <lineage>
        <taxon>Eukaryota</taxon>
        <taxon>Metazoa</taxon>
        <taxon>Chordata</taxon>
        <taxon>Craniata</taxon>
        <taxon>Vertebrata</taxon>
        <taxon>Euteleostomi</taxon>
        <taxon>Archelosauria</taxon>
        <taxon>Archosauria</taxon>
        <taxon>Dinosauria</taxon>
        <taxon>Saurischia</taxon>
        <taxon>Theropoda</taxon>
        <taxon>Coelurosauria</taxon>
        <taxon>Aves</taxon>
        <taxon>Neognathae</taxon>
        <taxon>Galloanserae</taxon>
        <taxon>Galliformes</taxon>
        <taxon>Phasianidae</taxon>
        <taxon>Phasianinae</taxon>
        <taxon>Gallus</taxon>
    </lineage>
</organism>
<feature type="chain" id="PRO_0000341978" description="Protein transport protein Sec16B">
    <location>
        <begin position="1"/>
        <end position="929"/>
    </location>
</feature>
<feature type="region of interest" description="Disordered" evidence="3">
    <location>
        <begin position="1"/>
        <end position="64"/>
    </location>
</feature>
<feature type="region of interest" description="Central conserved domain (CCD); required for localization to endoplasmic reticulum exit sites" evidence="2">
    <location>
        <begin position="228"/>
        <end position="669"/>
    </location>
</feature>
<feature type="region of interest" description="Disordered" evidence="3">
    <location>
        <begin position="675"/>
        <end position="727"/>
    </location>
</feature>
<feature type="region of interest" description="Disordered" evidence="3">
    <location>
        <begin position="781"/>
        <end position="929"/>
    </location>
</feature>
<feature type="compositionally biased region" description="Pro residues" evidence="3">
    <location>
        <begin position="1"/>
        <end position="10"/>
    </location>
</feature>
<feature type="compositionally biased region" description="Basic and acidic residues" evidence="3">
    <location>
        <begin position="694"/>
        <end position="710"/>
    </location>
</feature>
<feature type="compositionally biased region" description="Low complexity" evidence="3">
    <location>
        <begin position="781"/>
        <end position="795"/>
    </location>
</feature>
<feature type="compositionally biased region" description="Polar residues" evidence="3">
    <location>
        <begin position="838"/>
        <end position="848"/>
    </location>
</feature>
<feature type="compositionally biased region" description="Pro residues" evidence="3">
    <location>
        <begin position="856"/>
        <end position="871"/>
    </location>
</feature>
<gene>
    <name type="primary">SEC16B</name>
    <name type="synonym">RGPR</name>
</gene>
<name>SC16B_CHICK</name>
<reference key="1">
    <citation type="journal article" date="2005" name="Int. J. Mol. Med.">
        <title>A novel regucalcin gene promoter region-related protein: comparison of nucleotide and amino acid sequences in vertebrate species.</title>
        <authorList>
            <person name="Sawada N."/>
            <person name="Yamaguchi M."/>
        </authorList>
    </citation>
    <scope>NUCLEOTIDE SEQUENCE [MRNA]</scope>
</reference>
<protein>
    <recommendedName>
        <fullName>Protein transport protein Sec16B</fullName>
    </recommendedName>
    <alternativeName>
        <fullName>Regucalcin gene promoter region-related protein p117</fullName>
        <shortName>RGPR-p117</shortName>
    </alternativeName>
    <alternativeName>
        <fullName>SEC16 homolog B</fullName>
    </alternativeName>
</protein>
<dbReference type="EMBL" id="AB186361">
    <property type="protein sequence ID" value="BAD34968.1"/>
    <property type="molecule type" value="mRNA"/>
</dbReference>
<dbReference type="RefSeq" id="NP_001026440.1">
    <property type="nucleotide sequence ID" value="NM_001031269.1"/>
</dbReference>
<dbReference type="SMR" id="Q6AW68"/>
<dbReference type="FunCoup" id="Q6AW68">
    <property type="interactions" value="2"/>
</dbReference>
<dbReference type="STRING" id="9031.ENSGALP00000048637"/>
<dbReference type="GlyGen" id="Q6AW68">
    <property type="glycosylation" value="1 site"/>
</dbReference>
<dbReference type="PaxDb" id="9031-ENSGALP00000007034"/>
<dbReference type="GeneID" id="424431"/>
<dbReference type="KEGG" id="gga:424431"/>
<dbReference type="CTD" id="89866"/>
<dbReference type="VEuPathDB" id="HostDB:geneid_424431"/>
<dbReference type="eggNOG" id="KOG1913">
    <property type="taxonomic scope" value="Eukaryota"/>
</dbReference>
<dbReference type="InParanoid" id="Q6AW68"/>
<dbReference type="OrthoDB" id="8918678at2759"/>
<dbReference type="PhylomeDB" id="Q6AW68"/>
<dbReference type="PRO" id="PR:Q6AW68"/>
<dbReference type="Proteomes" id="UP000000539">
    <property type="component" value="Unassembled WGS sequence"/>
</dbReference>
<dbReference type="GO" id="GO:0070971">
    <property type="term" value="C:endoplasmic reticulum exit site"/>
    <property type="evidence" value="ECO:0000250"/>
    <property type="project" value="UniProtKB"/>
</dbReference>
<dbReference type="GO" id="GO:0005789">
    <property type="term" value="C:endoplasmic reticulum membrane"/>
    <property type="evidence" value="ECO:0007669"/>
    <property type="project" value="UniProtKB-SubCell"/>
</dbReference>
<dbReference type="GO" id="GO:0012507">
    <property type="term" value="C:ER to Golgi transport vesicle membrane"/>
    <property type="evidence" value="ECO:0000318"/>
    <property type="project" value="GO_Central"/>
</dbReference>
<dbReference type="GO" id="GO:0000139">
    <property type="term" value="C:Golgi membrane"/>
    <property type="evidence" value="ECO:0007669"/>
    <property type="project" value="UniProtKB-SubCell"/>
</dbReference>
<dbReference type="GO" id="GO:0006888">
    <property type="term" value="P:endoplasmic reticulum to Golgi vesicle-mediated transport"/>
    <property type="evidence" value="ECO:0000250"/>
    <property type="project" value="UniProtKB"/>
</dbReference>
<dbReference type="GO" id="GO:0007030">
    <property type="term" value="P:Golgi organization"/>
    <property type="evidence" value="ECO:0000318"/>
    <property type="project" value="GO_Central"/>
</dbReference>
<dbReference type="GO" id="GO:0007031">
    <property type="term" value="P:peroxisome organization"/>
    <property type="evidence" value="ECO:0007669"/>
    <property type="project" value="UniProtKB-KW"/>
</dbReference>
<dbReference type="GO" id="GO:0070973">
    <property type="term" value="P:protein localization to endoplasmic reticulum exit site"/>
    <property type="evidence" value="ECO:0000318"/>
    <property type="project" value="GO_Central"/>
</dbReference>
<dbReference type="GO" id="GO:0015031">
    <property type="term" value="P:protein transport"/>
    <property type="evidence" value="ECO:0007669"/>
    <property type="project" value="UniProtKB-KW"/>
</dbReference>
<dbReference type="CDD" id="cd09233">
    <property type="entry name" value="ACE1-Sec16-like"/>
    <property type="match status" value="1"/>
</dbReference>
<dbReference type="FunFam" id="1.25.40.1030:FF:000003">
    <property type="entry name" value="Protein transport protein sec16"/>
    <property type="match status" value="1"/>
</dbReference>
<dbReference type="Gene3D" id="1.25.40.1030">
    <property type="match status" value="1"/>
</dbReference>
<dbReference type="InterPro" id="IPR024340">
    <property type="entry name" value="Sec16_CCD"/>
</dbReference>
<dbReference type="InterPro" id="IPR024298">
    <property type="entry name" value="Sec16_Sec23-bd"/>
</dbReference>
<dbReference type="PANTHER" id="PTHR13402:SF11">
    <property type="entry name" value="PROTEIN TRANSPORT PROTEIN SEC16B"/>
    <property type="match status" value="1"/>
</dbReference>
<dbReference type="PANTHER" id="PTHR13402">
    <property type="entry name" value="RGPR-RELATED"/>
    <property type="match status" value="1"/>
</dbReference>
<dbReference type="Pfam" id="PF12932">
    <property type="entry name" value="Sec16"/>
    <property type="match status" value="1"/>
</dbReference>
<dbReference type="Pfam" id="PF12931">
    <property type="entry name" value="TPR_Sec16"/>
    <property type="match status" value="1"/>
</dbReference>
<comment type="function">
    <text evidence="2">Plays a role in the organization of the endoplasmic reticulum exit sites (ERES), also known as transitional endoplasmic reticulum (tER). Required for secretory cargo traffic from the endoplasmic reticulum to the Golgi apparatus. Involved in peroxisome biogenesis. Regulates the transport of peroxisomal biogenesis factors PEX3 and PEX16 from the ER to peroxisomes.</text>
</comment>
<comment type="subunit">
    <text evidence="2">SEC16A and SEC16B are each present in multiple copies in a heteromeric complex.</text>
</comment>
<comment type="subcellular location">
    <subcellularLocation>
        <location evidence="2">Endoplasmic reticulum membrane</location>
        <topology evidence="1">Peripheral membrane protein</topology>
    </subcellularLocation>
    <subcellularLocation>
        <location evidence="1">Golgi apparatus membrane</location>
        <topology evidence="1">Peripheral membrane protein</topology>
    </subcellularLocation>
    <text evidence="2">Localizes to endoplasmic reticulum exit sites (ERES), also known as transitional endoplasmic reticulum (tER).</text>
</comment>
<comment type="similarity">
    <text evidence="4">Belongs to the SEC16 family.</text>
</comment>
<sequence>MEPWDPPQLPPVRHSHAAGSGRAEGRHGTPPPWRPIISGPLPRPGSWDPGRDLHRPASQAESYESGHAFRAYSRQGYEDPHWQYPGAAYRDNHAYQSHQWQPTAWQGNRDVTQVKPHGKSTTYRDQHYYRGYHPNLAASPLGQDRSQTYDAYKEGSRRSWAGVSNLGEASGQPQQPSLLQQYRESGLSSSGYELSQYIRDGAEPNDTAFLGGWSPVQGGGPLESAVMAPHKFLQPHVPVCLGAGGQLVLVCPHRPTEGQLPLVELHSLEVILQGTTDQEELQAFPGPLAREDLHKVDVMTFCQQKIASSCDLSTQRGRDSALLWKLLVLLCRQNGSMVGSDVAELLMQDCRQQERYKRQEPAVGPVSLADEEWRQLGTLDLITGEVPPVVETQAQIVEKFTKLLYYGRKKDALVWAMRNQLWGHALFLSSKMDPRTYSWVLSGFTSTLATNDPLQTFFQLMSGRIPQAAQSCGDAKWGDWRPHLAVLLSNKVGDMELNHRAIVTMGDTLAGKGAVEAAHFCYLMADIPFGYFGVKADRMALLGSSHRQAFTQFATKEAIQRMEIFEYCQQLRHPTSFLLPFQVYKLLYASRLADHGLPAQALLYCEQIATVLLQQDPTSHPVLAQQLTKLAERLKLCDPLLLLEMPEQDPVLEPQWLLQLRTYCQHCQVQDDLAPEVALTQPEPWDTTATPGREMVHEQPHSDGPHDEQWHQPPVPLQGPDPHQDVSIPPLEVAVLGVGPISQEELCTEPSLQAVPTAGDAEEPQDAHGVQQPVLAELQELSTRARSASESSTASLEEDSQTSSDSPAEELEGTSEDKSFGFRWFGWFRSKPQKETSPKATTSGSPTPGLQDRRSPSPPGAVPSAQPPASPSPYRNPVSIDMKGPWDADGHEPLPGMVPLFNPAQVSQLAAARPTQPRLLSQRRYPNPL</sequence>
<proteinExistence type="evidence at transcript level"/>
<accession>Q6AW68</accession>